<sequence>MAKEFSRSQRVSQEMQKEIALILQREIKDPRVGMATVSGIELSRDLAYAKVFVTFLNVLTDNADPDTVKNGIKALQDASGYIRTLLGKAMRLRIVPELTFAYDNSLIEGMRMSNLVSNVIKNDVERQVNPGSDEEK</sequence>
<keyword id="KW-0963">Cytoplasm</keyword>
<keyword id="KW-0690">Ribosome biogenesis</keyword>
<proteinExistence type="inferred from homology"/>
<accession>B1JLX9</accession>
<feature type="chain" id="PRO_1000088949" description="Ribosome-binding factor A">
    <location>
        <begin position="1"/>
        <end position="136"/>
    </location>
</feature>
<gene>
    <name evidence="1" type="primary">rbfA</name>
    <name type="ordered locus">YPK_3729</name>
</gene>
<dbReference type="EMBL" id="CP000950">
    <property type="protein sequence ID" value="ACA69996.1"/>
    <property type="molecule type" value="Genomic_DNA"/>
</dbReference>
<dbReference type="RefSeq" id="WP_002209255.1">
    <property type="nucleotide sequence ID" value="NZ_CP009792.1"/>
</dbReference>
<dbReference type="SMR" id="B1JLX9"/>
<dbReference type="GeneID" id="96663988"/>
<dbReference type="KEGG" id="ypy:YPK_3729"/>
<dbReference type="PATRIC" id="fig|502800.11.peg.77"/>
<dbReference type="GO" id="GO:0005829">
    <property type="term" value="C:cytosol"/>
    <property type="evidence" value="ECO:0007669"/>
    <property type="project" value="TreeGrafter"/>
</dbReference>
<dbReference type="GO" id="GO:0043024">
    <property type="term" value="F:ribosomal small subunit binding"/>
    <property type="evidence" value="ECO:0007669"/>
    <property type="project" value="TreeGrafter"/>
</dbReference>
<dbReference type="GO" id="GO:0030490">
    <property type="term" value="P:maturation of SSU-rRNA"/>
    <property type="evidence" value="ECO:0007669"/>
    <property type="project" value="UniProtKB-UniRule"/>
</dbReference>
<dbReference type="FunFam" id="3.30.300.20:FF:000007">
    <property type="entry name" value="Ribosome-binding factor A"/>
    <property type="match status" value="1"/>
</dbReference>
<dbReference type="Gene3D" id="3.30.300.20">
    <property type="match status" value="1"/>
</dbReference>
<dbReference type="HAMAP" id="MF_00003">
    <property type="entry name" value="RbfA"/>
    <property type="match status" value="1"/>
</dbReference>
<dbReference type="InterPro" id="IPR015946">
    <property type="entry name" value="KH_dom-like_a/b"/>
</dbReference>
<dbReference type="InterPro" id="IPR000238">
    <property type="entry name" value="RbfA"/>
</dbReference>
<dbReference type="InterPro" id="IPR023799">
    <property type="entry name" value="RbfA_dom_sf"/>
</dbReference>
<dbReference type="InterPro" id="IPR020053">
    <property type="entry name" value="Ribosome-bd_factorA_CS"/>
</dbReference>
<dbReference type="NCBIfam" id="TIGR00082">
    <property type="entry name" value="rbfA"/>
    <property type="match status" value="1"/>
</dbReference>
<dbReference type="PANTHER" id="PTHR33515">
    <property type="entry name" value="RIBOSOME-BINDING FACTOR A, CHLOROPLASTIC-RELATED"/>
    <property type="match status" value="1"/>
</dbReference>
<dbReference type="PANTHER" id="PTHR33515:SF1">
    <property type="entry name" value="RIBOSOME-BINDING FACTOR A, CHLOROPLASTIC-RELATED"/>
    <property type="match status" value="1"/>
</dbReference>
<dbReference type="Pfam" id="PF02033">
    <property type="entry name" value="RBFA"/>
    <property type="match status" value="1"/>
</dbReference>
<dbReference type="SUPFAM" id="SSF89919">
    <property type="entry name" value="Ribosome-binding factor A, RbfA"/>
    <property type="match status" value="1"/>
</dbReference>
<dbReference type="PROSITE" id="PS01319">
    <property type="entry name" value="RBFA"/>
    <property type="match status" value="1"/>
</dbReference>
<protein>
    <recommendedName>
        <fullName evidence="1">Ribosome-binding factor A</fullName>
    </recommendedName>
</protein>
<name>RBFA_YERPY</name>
<reference key="1">
    <citation type="submission" date="2008-02" db="EMBL/GenBank/DDBJ databases">
        <title>Complete sequence of Yersinia pseudotuberculosis YPIII.</title>
        <authorList>
            <consortium name="US DOE Joint Genome Institute"/>
            <person name="Copeland A."/>
            <person name="Lucas S."/>
            <person name="Lapidus A."/>
            <person name="Glavina del Rio T."/>
            <person name="Dalin E."/>
            <person name="Tice H."/>
            <person name="Bruce D."/>
            <person name="Goodwin L."/>
            <person name="Pitluck S."/>
            <person name="Munk A.C."/>
            <person name="Brettin T."/>
            <person name="Detter J.C."/>
            <person name="Han C."/>
            <person name="Tapia R."/>
            <person name="Schmutz J."/>
            <person name="Larimer F."/>
            <person name="Land M."/>
            <person name="Hauser L."/>
            <person name="Challacombe J.F."/>
            <person name="Green L."/>
            <person name="Lindler L.E."/>
            <person name="Nikolich M.P."/>
            <person name="Richardson P."/>
        </authorList>
    </citation>
    <scope>NUCLEOTIDE SEQUENCE [LARGE SCALE GENOMIC DNA]</scope>
    <source>
        <strain>YPIII</strain>
    </source>
</reference>
<evidence type="ECO:0000255" key="1">
    <source>
        <dbReference type="HAMAP-Rule" id="MF_00003"/>
    </source>
</evidence>
<comment type="function">
    <text evidence="1">One of several proteins that assist in the late maturation steps of the functional core of the 30S ribosomal subunit. Associates with free 30S ribosomal subunits (but not with 30S subunits that are part of 70S ribosomes or polysomes). Required for efficient processing of 16S rRNA. May interact with the 5'-terminal helix region of 16S rRNA.</text>
</comment>
<comment type="subunit">
    <text evidence="1">Monomer. Binds 30S ribosomal subunits, but not 50S ribosomal subunits or 70S ribosomes.</text>
</comment>
<comment type="subcellular location">
    <subcellularLocation>
        <location evidence="1">Cytoplasm</location>
    </subcellularLocation>
</comment>
<comment type="similarity">
    <text evidence="1">Belongs to the RbfA family.</text>
</comment>
<organism>
    <name type="scientific">Yersinia pseudotuberculosis serotype O:3 (strain YPIII)</name>
    <dbReference type="NCBI Taxonomy" id="502800"/>
    <lineage>
        <taxon>Bacteria</taxon>
        <taxon>Pseudomonadati</taxon>
        <taxon>Pseudomonadota</taxon>
        <taxon>Gammaproteobacteria</taxon>
        <taxon>Enterobacterales</taxon>
        <taxon>Yersiniaceae</taxon>
        <taxon>Yersinia</taxon>
    </lineage>
</organism>